<evidence type="ECO:0000255" key="1"/>
<evidence type="ECO:0000256" key="2">
    <source>
        <dbReference type="SAM" id="MobiDB-lite"/>
    </source>
</evidence>
<evidence type="ECO:0000269" key="3">
    <source>
    </source>
</evidence>
<evidence type="ECO:0000269" key="4">
    <source>
    </source>
</evidence>
<evidence type="ECO:0000269" key="5">
    <source>
    </source>
</evidence>
<evidence type="ECO:0000269" key="6">
    <source>
    </source>
</evidence>
<evidence type="ECO:0000269" key="7">
    <source>
    </source>
</evidence>
<evidence type="ECO:0000269" key="8">
    <source>
    </source>
</evidence>
<evidence type="ECO:0000269" key="9">
    <source>
    </source>
</evidence>
<evidence type="ECO:0000305" key="10"/>
<keyword id="KW-0002">3D-structure</keyword>
<keyword id="KW-0010">Activator</keyword>
<keyword id="KW-0539">Nucleus</keyword>
<keyword id="KW-1185">Reference proteome</keyword>
<keyword id="KW-0804">Transcription</keyword>
<keyword id="KW-0805">Transcription regulation</keyword>
<accession>P33308</accession>
<accession>D6W1I5</accession>
<name>MED9_YEAST</name>
<protein>
    <recommendedName>
        <fullName>Mediator of RNA polymerase II transcription subunit 9</fullName>
    </recommendedName>
    <alternativeName>
        <fullName>Chromosome segregation protein 2</fullName>
    </alternativeName>
    <alternativeName>
        <fullName>Mediator complex subunit 9</fullName>
    </alternativeName>
</protein>
<gene>
    <name type="primary">CSE2</name>
    <name type="synonym">MED9</name>
    <name type="ordered locus">YNR010W</name>
    <name type="ORF">N2046</name>
</gene>
<sequence>MNLQNNVLNQIHQILLPTNPTLDKPNAEATKEEFSSAENRDEKDYLTNQQPKNLSTPSTSSNGEFIPHIFYSLHQIRKDPNNLSNQLETLTGSIRHRLKLCKSLISENEDTKDLLSKSPSEWQDIIHQREQELQIKRDVLDDLYRKLQR</sequence>
<proteinExistence type="evidence at protein level"/>
<comment type="function">
    <text evidence="3 6 7 8">Component of the Mediator complex, a coactivator involved in the regulated transcription of nearly all RNA polymerase II-dependent genes. Mediator functions as a bridge to convey information from gene-specific regulatory proteins to the basal RNA polymerase II transcription machinery. The Mediator complex, having a compact conformation in its free form, is recruited to promoters by direct interactions with regulatory proteins and serves for the assembly of a functional preinitiation complex with RNA polymerase II and the general transcription factors. The Mediator complex unfolds to an extended conformation and partially surrounds RNA polymerase II, specifically interacting with the unphosphorylated form of the C-terminal domain (CTD) of RNA polymerase II. The Mediator complex dissociates from the RNA polymerase II holoenzyme and stays at the promoter when transcriptional elongation begins.</text>
</comment>
<comment type="subunit">
    <text evidence="3 9">Component of the Mediator complex, which is composed of at least 21 subunits that form three structurally distinct submodules. The Mediator head module contains MED6, MED8, MED11, SRB4/MED17, SRB5/MED18, ROX3/MED19, SRB2/MED20 and SRB6/MED22, the middle module contains MED1, MED4, NUT1/MED5, MED7, CSE2/MED9, NUT2/MED10, SRB7/MED21 and SOH1/MED31, and the tail module contains MED2, PGD1/MED3, RGR1/MED14, GAL11/MED15 and SIN4/MED16. The head and the middle modules interact directly with RNA polymerase II, whereas the elongated tail module interacts with gene-specific regulatory proteins. CSE2/MED9 interacts directly with MED4.</text>
</comment>
<comment type="interaction">
    <interactant intactId="EBI-5174">
        <id>P33308</id>
    </interactant>
    <interactant intactId="EBI-32854">
        <id>Q12321</id>
        <label>MED1</label>
    </interactant>
    <organismsDiffer>false</organismsDiffer>
    <experiments>3</experiments>
</comment>
<comment type="interaction">
    <interactant intactId="EBI-5174">
        <id>P33308</id>
    </interactant>
    <interactant intactId="EBI-31503">
        <id>Q12343</id>
        <label>MED4</label>
    </interactant>
    <organismsDiffer>false</organismsDiffer>
    <experiments>3</experiments>
</comment>
<comment type="interaction">
    <interactant intactId="EBI-5174">
        <id>P33308</id>
    </interactant>
    <interactant intactId="EBI-10674">
        <id>Q08278</id>
        <label>MED7</label>
    </interactant>
    <organismsDiffer>false</organismsDiffer>
    <experiments>3</experiments>
</comment>
<comment type="subcellular location">
    <subcellularLocation>
        <location evidence="4">Nucleus</location>
    </subcellularLocation>
</comment>
<comment type="miscellaneous">
    <text evidence="5">Present with 1364 molecules/cell in log phase SD medium.</text>
</comment>
<comment type="similarity">
    <text evidence="10">Belongs to the Mediator complex subunit 9 family.</text>
</comment>
<reference key="1">
    <citation type="journal article" date="1993" name="Mol. Cell. Biol.">
        <title>CSE1 and CSE2, two new genes required for accurate mitotic chromosome segregation in Saccharomyces cerevisiae.</title>
        <authorList>
            <person name="Xiao Z."/>
            <person name="McGrew J.T."/>
            <person name="Schroeder A.J."/>
            <person name="Fitzgerald-Hayes M."/>
        </authorList>
    </citation>
    <scope>NUCLEOTIDE SEQUENCE [GENOMIC DNA]</scope>
</reference>
<reference key="2">
    <citation type="journal article" date="1994" name="Yeast">
        <title>Twelve open reading frames revealed in the 23.6 kb segment flanking the centromere on the Saccharomyces cerevisiae chromosome XIV right arm.</title>
        <authorList>
            <person name="Verhasselt P."/>
            <person name="Aert R."/>
            <person name="Voet M."/>
            <person name="Volckaert G."/>
        </authorList>
    </citation>
    <scope>NUCLEOTIDE SEQUENCE [GENOMIC DNA]</scope>
    <source>
        <strain>ATCC 96604 / S288c / FY1679</strain>
    </source>
</reference>
<reference key="3">
    <citation type="journal article" date="1997" name="Nature">
        <title>The nucleotide sequence of Saccharomyces cerevisiae chromosome XIV and its evolutionary implications.</title>
        <authorList>
            <person name="Philippsen P."/>
            <person name="Kleine K."/>
            <person name="Poehlmann R."/>
            <person name="Duesterhoeft A."/>
            <person name="Hamberg K."/>
            <person name="Hegemann J.H."/>
            <person name="Obermaier B."/>
            <person name="Urrestarazu L.A."/>
            <person name="Aert R."/>
            <person name="Albermann K."/>
            <person name="Altmann R."/>
            <person name="Andre B."/>
            <person name="Baladron V."/>
            <person name="Ballesta J.P.G."/>
            <person name="Becam A.-M."/>
            <person name="Beinhauer J.D."/>
            <person name="Boskovic J."/>
            <person name="Buitrago M.J."/>
            <person name="Bussereau F."/>
            <person name="Coster F."/>
            <person name="Crouzet M."/>
            <person name="D'Angelo M."/>
            <person name="Dal Pero F."/>
            <person name="De Antoni A."/>
            <person name="del Rey F."/>
            <person name="Doignon F."/>
            <person name="Domdey H."/>
            <person name="Dubois E."/>
            <person name="Fiedler T.A."/>
            <person name="Fleig U."/>
            <person name="Floeth M."/>
            <person name="Fritz C."/>
            <person name="Gaillardin C."/>
            <person name="Garcia-Cantalejo J.M."/>
            <person name="Glansdorff N."/>
            <person name="Goffeau A."/>
            <person name="Gueldener U."/>
            <person name="Herbert C.J."/>
            <person name="Heumann K."/>
            <person name="Heuss-Neitzel D."/>
            <person name="Hilbert H."/>
            <person name="Hinni K."/>
            <person name="Iraqui Houssaini I."/>
            <person name="Jacquet M."/>
            <person name="Jimenez A."/>
            <person name="Jonniaux J.-L."/>
            <person name="Karpfinger-Hartl L."/>
            <person name="Lanfranchi G."/>
            <person name="Lepingle A."/>
            <person name="Levesque H."/>
            <person name="Lyck R."/>
            <person name="Maftahi M."/>
            <person name="Mallet L."/>
            <person name="Maurer C.T.C."/>
            <person name="Messenguy F."/>
            <person name="Mewes H.-W."/>
            <person name="Moestl D."/>
            <person name="Nasr F."/>
            <person name="Nicaud J.-M."/>
            <person name="Niedenthal R.K."/>
            <person name="Pandolfo D."/>
            <person name="Pierard A."/>
            <person name="Piravandi E."/>
            <person name="Planta R.J."/>
            <person name="Pohl T.M."/>
            <person name="Purnelle B."/>
            <person name="Rebischung C."/>
            <person name="Remacha M.A."/>
            <person name="Revuelta J.L."/>
            <person name="Rinke M."/>
            <person name="Saiz J.E."/>
            <person name="Sartorello F."/>
            <person name="Scherens B."/>
            <person name="Sen-Gupta M."/>
            <person name="Soler-Mira A."/>
            <person name="Urbanus J.H.M."/>
            <person name="Valle G."/>
            <person name="Van Dyck L."/>
            <person name="Verhasselt P."/>
            <person name="Vierendeels F."/>
            <person name="Vissers S."/>
            <person name="Voet M."/>
            <person name="Volckaert G."/>
            <person name="Wach A."/>
            <person name="Wambutt R."/>
            <person name="Wedler H."/>
            <person name="Zollner A."/>
            <person name="Hani J."/>
        </authorList>
    </citation>
    <scope>NUCLEOTIDE SEQUENCE [LARGE SCALE GENOMIC DNA]</scope>
    <source>
        <strain>ATCC 204508 / S288c</strain>
    </source>
</reference>
<reference key="4">
    <citation type="journal article" date="2014" name="G3 (Bethesda)">
        <title>The reference genome sequence of Saccharomyces cerevisiae: Then and now.</title>
        <authorList>
            <person name="Engel S.R."/>
            <person name="Dietrich F.S."/>
            <person name="Fisk D.G."/>
            <person name="Binkley G."/>
            <person name="Balakrishnan R."/>
            <person name="Costanzo M.C."/>
            <person name="Dwight S.S."/>
            <person name="Hitz B.C."/>
            <person name="Karra K."/>
            <person name="Nash R.S."/>
            <person name="Weng S."/>
            <person name="Wong E.D."/>
            <person name="Lloyd P."/>
            <person name="Skrzypek M.S."/>
            <person name="Miyasato S.R."/>
            <person name="Simison M."/>
            <person name="Cherry J.M."/>
        </authorList>
    </citation>
    <scope>GENOME REANNOTATION</scope>
    <source>
        <strain>ATCC 204508 / S288c</strain>
    </source>
</reference>
<reference key="5">
    <citation type="journal article" date="2007" name="Genome Res.">
        <title>Approaching a complete repository of sequence-verified protein-encoding clones for Saccharomyces cerevisiae.</title>
        <authorList>
            <person name="Hu Y."/>
            <person name="Rolfs A."/>
            <person name="Bhullar B."/>
            <person name="Murthy T.V.S."/>
            <person name="Zhu C."/>
            <person name="Berger M.F."/>
            <person name="Camargo A.A."/>
            <person name="Kelley F."/>
            <person name="McCarron S."/>
            <person name="Jepson D."/>
            <person name="Richardson A."/>
            <person name="Raphael J."/>
            <person name="Moreira D."/>
            <person name="Taycher E."/>
            <person name="Zuo D."/>
            <person name="Mohr S."/>
            <person name="Kane M.F."/>
            <person name="Williamson J."/>
            <person name="Simpson A.J.G."/>
            <person name="Bulyk M.L."/>
            <person name="Harlow E."/>
            <person name="Marsischky G."/>
            <person name="Kolodner R.D."/>
            <person name="LaBaer J."/>
        </authorList>
    </citation>
    <scope>NUCLEOTIDE SEQUENCE [GENOMIC DNA]</scope>
    <source>
        <strain>ATCC 204508 / S288c</strain>
    </source>
</reference>
<reference key="6">
    <citation type="journal article" date="1998" name="J. Biol. Chem.">
        <title>Identification of new mediator subunits in the RNA polymerase II holoenzyme from Saccharomyces cerevisiae.</title>
        <authorList>
            <person name="Gustafsson C.M."/>
            <person name="Myers L.C."/>
            <person name="Beve J."/>
            <person name="Spaahr H."/>
            <person name="Lui M."/>
            <person name="Erdjument-Bromage H."/>
            <person name="Tempst P."/>
            <person name="Kornberg R.D."/>
        </authorList>
    </citation>
    <scope>COMPONENT OF MEDIATOR COMPLEX</scope>
</reference>
<reference key="7">
    <citation type="journal article" date="2001" name="J. Biol. Chem.">
        <title>The structural and functional organization of the yeast mediator complex.</title>
        <authorList>
            <person name="Kang J.S."/>
            <person name="Kim S.H."/>
            <person name="Hwang M.S."/>
            <person name="Han S.J."/>
            <person name="Lee Y.C."/>
            <person name="Kim Y.-J."/>
        </authorList>
    </citation>
    <scope>INTERACTION WITH MED4</scope>
    <scope>FUNCTION OF THE MEDIATOR COMPLEX</scope>
    <scope>INTERACTION OF THE MEDIATOR COMPLEX WITH RNA POLYMERASE II</scope>
</reference>
<reference key="8">
    <citation type="journal article" date="2003" name="Nature">
        <title>Global analysis of protein localization in budding yeast.</title>
        <authorList>
            <person name="Huh W.-K."/>
            <person name="Falvo J.V."/>
            <person name="Gerke L.C."/>
            <person name="Carroll A.S."/>
            <person name="Howson R.W."/>
            <person name="Weissman J.S."/>
            <person name="O'Shea E.K."/>
        </authorList>
    </citation>
    <scope>SUBCELLULAR LOCATION [LARGE SCALE ANALYSIS]</scope>
</reference>
<reference key="9">
    <citation type="journal article" date="2003" name="Nature">
        <title>Global analysis of protein expression in yeast.</title>
        <authorList>
            <person name="Ghaemmaghami S."/>
            <person name="Huh W.-K."/>
            <person name="Bower K."/>
            <person name="Howson R.W."/>
            <person name="Belle A."/>
            <person name="Dephoure N."/>
            <person name="O'Shea E.K."/>
            <person name="Weissman J.S."/>
        </authorList>
    </citation>
    <scope>LEVEL OF PROTEIN EXPRESSION [LARGE SCALE ANALYSIS]</scope>
</reference>
<reference key="10">
    <citation type="journal article" date="2004" name="Mol. Cell">
        <title>A unified nomenclature for protein subunits of mediator complexes linking transcriptional regulators to RNA polymerase II.</title>
        <authorList>
            <person name="Bourbon H.-M."/>
            <person name="Aguilera A."/>
            <person name="Ansari A.Z."/>
            <person name="Asturias F.J."/>
            <person name="Berk A.J."/>
            <person name="Bjoerklund S."/>
            <person name="Blackwell T.K."/>
            <person name="Borggrefe T."/>
            <person name="Carey M."/>
            <person name="Carlson M."/>
            <person name="Conaway J.W."/>
            <person name="Conaway R.C."/>
            <person name="Emmons S.W."/>
            <person name="Fondell J.D."/>
            <person name="Freedman L.P."/>
            <person name="Fukasawa T."/>
            <person name="Gustafsson C.M."/>
            <person name="Han M."/>
            <person name="He X."/>
            <person name="Herman P.K."/>
            <person name="Hinnebusch A.G."/>
            <person name="Holmberg S."/>
            <person name="Holstege F.C.P."/>
            <person name="Jaehning J.A."/>
            <person name="Kim Y.-J."/>
            <person name="Kuras L."/>
            <person name="Leutz A."/>
            <person name="Lis J.T."/>
            <person name="Meisterernest M."/>
            <person name="Naeaer A.M."/>
            <person name="Nasmyth K."/>
            <person name="Parvin J.D."/>
            <person name="Ptashne M."/>
            <person name="Reinberg D."/>
            <person name="Ronne H."/>
            <person name="Sadowski I."/>
            <person name="Sakurai H."/>
            <person name="Sipiczki M."/>
            <person name="Sternberg P.W."/>
            <person name="Stillman D.J."/>
            <person name="Strich R."/>
            <person name="Struhl K."/>
            <person name="Svejstrup J.Q."/>
            <person name="Tuck S."/>
            <person name="Winston F."/>
            <person name="Roeder R.G."/>
            <person name="Kornberg R.D."/>
        </authorList>
    </citation>
    <scope>NOMENCLATURE</scope>
</reference>
<reference key="11">
    <citation type="journal article" date="2004" name="Nucleic Acids Res.">
        <title>A high resolution protein interaction map of the yeast Mediator complex.</title>
        <authorList>
            <person name="Guglielmi B."/>
            <person name="van Berkum N.L."/>
            <person name="Klapholz B."/>
            <person name="Bijma T."/>
            <person name="Boube M."/>
            <person name="Boschiero C."/>
            <person name="Bourbon H.-M."/>
            <person name="Holstege F.C.P."/>
            <person name="Werner M."/>
        </authorList>
    </citation>
    <scope>TOPOLOGY OF THE MEDIATOR COMPLEX</scope>
</reference>
<reference key="12">
    <citation type="journal article" date="2005" name="J. Biol. Chem.">
        <title>Preponderance of free mediator in the yeast Saccharomyces cerevisiae.</title>
        <authorList>
            <person name="Takagi Y."/>
            <person name="Chadick J.Z."/>
            <person name="Davis J.A."/>
            <person name="Asturias F.J."/>
        </authorList>
    </citation>
    <scope>CHARACTERIZATION OF THE MEDIATOR COMPLEX</scope>
</reference>
<reference key="13">
    <citation type="journal article" date="2005" name="J. Biol. Chem.">
        <title>Mediator and TFIIH govern carboxyl-terminal domain-dependent transcription in yeast extracts.</title>
        <authorList>
            <person name="Nair D."/>
            <person name="Kim Y."/>
            <person name="Myers L.C."/>
        </authorList>
    </citation>
    <scope>FUNCTION OF THE MEDIATOR COMPLEX</scope>
</reference>
<reference key="14">
    <citation type="journal article" date="2005" name="Mol. Cell">
        <title>Mediator expression profiling epistasis reveals a signal transduction pathway with antagonistic submodules and highly specific downstream targets.</title>
        <authorList>
            <person name="van de Peppel J."/>
            <person name="Kettelarij N."/>
            <person name="van Bakel H."/>
            <person name="Kockelkorn T.T.J.P."/>
            <person name="van Leenen D."/>
            <person name="Holstege F.C.P."/>
        </authorList>
    </citation>
    <scope>FUNCTION</scope>
</reference>
<reference key="15">
    <citation type="journal article" date="2006" name="J. Biol. Chem.">
        <title>Mediator as a general transcription factor.</title>
        <authorList>
            <person name="Takagi Y."/>
            <person name="Kornberg R.D."/>
        </authorList>
    </citation>
    <scope>FUNCTION OF THE MEDIATOR COMPLEX</scope>
</reference>
<reference key="16">
    <citation type="journal article" date="2007" name="J. Biol. Chem.">
        <title>Med19(Rox3) regulates intermodule interactions in the Saccharomyces cerevisiae mediator complex.</title>
        <authorList>
            <person name="Baidoobonso S.M."/>
            <person name="Guidi B.W."/>
            <person name="Myers L.C."/>
        </authorList>
    </citation>
    <scope>INTERACTION WITH SRB5</scope>
    <scope>CHARACTERIZATION OF THE MEDIATOR COMPLEX</scope>
    <scope>INTERACTION OF THE MEDIATOR COMPLEX WITH RNA POLYMERASE II</scope>
</reference>
<reference key="17">
    <citation type="journal article" date="2009" name="Science">
        <title>Global analysis of Cdk1 substrate phosphorylation sites provides insights into evolution.</title>
        <authorList>
            <person name="Holt L.J."/>
            <person name="Tuch B.B."/>
            <person name="Villen J."/>
            <person name="Johnson A.D."/>
            <person name="Gygi S.P."/>
            <person name="Morgan D.O."/>
        </authorList>
    </citation>
    <scope>IDENTIFICATION BY MASS SPECTROMETRY [LARGE SCALE ANALYSIS]</scope>
</reference>
<reference key="18">
    <citation type="journal article" date="2002" name="Mol. Cell">
        <title>Structure of the yeast RNA polymerase II holoenzyme: mediator conformation and polymerase interaction.</title>
        <authorList>
            <person name="Davis J.A."/>
            <person name="Takagi Y."/>
            <person name="Kornberg R.D."/>
            <person name="Asturias F.J."/>
        </authorList>
    </citation>
    <scope>ELECTRON MICROSCOPY OF MEDIATOR COMPLEX IN COMPLEX WITH RNA POLYMERASE II</scope>
</reference>
<feature type="chain" id="PRO_0000076529" description="Mediator of RNA polymerase II transcription subunit 9">
    <location>
        <begin position="1"/>
        <end position="149"/>
    </location>
</feature>
<feature type="region of interest" description="Disordered" evidence="2">
    <location>
        <begin position="18"/>
        <end position="64"/>
    </location>
</feature>
<feature type="short sequence motif" description="Nuclear localization signal" evidence="1">
    <location>
        <begin position="77"/>
        <end position="99"/>
    </location>
</feature>
<feature type="short sequence motif" description="Nuclear localization signal" evidence="1">
    <location>
        <begin position="136"/>
        <end position="149"/>
    </location>
</feature>
<feature type="compositionally biased region" description="Basic and acidic residues" evidence="2">
    <location>
        <begin position="25"/>
        <end position="45"/>
    </location>
</feature>
<feature type="compositionally biased region" description="Polar residues" evidence="2">
    <location>
        <begin position="46"/>
        <end position="63"/>
    </location>
</feature>
<organism>
    <name type="scientific">Saccharomyces cerevisiae (strain ATCC 204508 / S288c)</name>
    <name type="common">Baker's yeast</name>
    <dbReference type="NCBI Taxonomy" id="559292"/>
    <lineage>
        <taxon>Eukaryota</taxon>
        <taxon>Fungi</taxon>
        <taxon>Dikarya</taxon>
        <taxon>Ascomycota</taxon>
        <taxon>Saccharomycotina</taxon>
        <taxon>Saccharomycetes</taxon>
        <taxon>Saccharomycetales</taxon>
        <taxon>Saccharomycetaceae</taxon>
        <taxon>Saccharomyces</taxon>
    </lineage>
</organism>
<dbReference type="EMBL" id="L14839">
    <property type="protein sequence ID" value="AAA34532.1"/>
    <property type="molecule type" value="Genomic_DNA"/>
</dbReference>
<dbReference type="EMBL" id="X77395">
    <property type="protein sequence ID" value="CAA54578.1"/>
    <property type="molecule type" value="Genomic_DNA"/>
</dbReference>
<dbReference type="EMBL" id="Z71625">
    <property type="protein sequence ID" value="CAA96287.1"/>
    <property type="molecule type" value="Genomic_DNA"/>
</dbReference>
<dbReference type="EMBL" id="AY558422">
    <property type="protein sequence ID" value="AAS56748.1"/>
    <property type="molecule type" value="Genomic_DNA"/>
</dbReference>
<dbReference type="EMBL" id="BK006947">
    <property type="protein sequence ID" value="DAA10551.1"/>
    <property type="molecule type" value="Genomic_DNA"/>
</dbReference>
<dbReference type="PIR" id="B48083">
    <property type="entry name" value="B48083"/>
</dbReference>
<dbReference type="RefSeq" id="NP_014407.3">
    <property type="nucleotide sequence ID" value="NM_001183187.3"/>
</dbReference>
<dbReference type="PDB" id="5OQM">
    <property type="method" value="EM"/>
    <property type="resolution" value="5.80 A"/>
    <property type="chains" value="j=1-149"/>
</dbReference>
<dbReference type="PDB" id="5SVA">
    <property type="method" value="EM"/>
    <property type="resolution" value="15.30 A"/>
    <property type="chains" value="V=1-149"/>
</dbReference>
<dbReference type="PDB" id="7UI9">
    <property type="method" value="EM"/>
    <property type="resolution" value="3.30 A"/>
    <property type="chains" value="i=1-149"/>
</dbReference>
<dbReference type="PDB" id="7UIF">
    <property type="method" value="EM"/>
    <property type="resolution" value="4.60 A"/>
    <property type="chains" value="i=1-149"/>
</dbReference>
<dbReference type="PDB" id="7UIG">
    <property type="method" value="EM"/>
    <property type="resolution" value="4.30 A"/>
    <property type="chains" value="i=1-149"/>
</dbReference>
<dbReference type="PDB" id="7UIO">
    <property type="method" value="EM"/>
    <property type="resolution" value="3.30 A"/>
    <property type="chains" value="Ai/Bi=1-149"/>
</dbReference>
<dbReference type="PDB" id="8CEN">
    <property type="method" value="EM"/>
    <property type="resolution" value="3.00 A"/>
    <property type="chains" value="j=1-149"/>
</dbReference>
<dbReference type="PDB" id="8CEO">
    <property type="method" value="EM"/>
    <property type="resolution" value="3.60 A"/>
    <property type="chains" value="j=1-149"/>
</dbReference>
<dbReference type="PDBsum" id="5OQM"/>
<dbReference type="PDBsum" id="5SVA"/>
<dbReference type="PDBsum" id="7UI9"/>
<dbReference type="PDBsum" id="7UIF"/>
<dbReference type="PDBsum" id="7UIG"/>
<dbReference type="PDBsum" id="7UIO"/>
<dbReference type="PDBsum" id="8CEN"/>
<dbReference type="PDBsum" id="8CEO"/>
<dbReference type="EMDB" id="EMD-26542"/>
<dbReference type="EMDB" id="EMD-26544"/>
<dbReference type="EMDB" id="EMD-26545"/>
<dbReference type="EMDB" id="EMD-26551"/>
<dbReference type="EMDB" id="EMD-2786"/>
<dbReference type="EMDB" id="EMD-3850"/>
<dbReference type="EMDB" id="EMD-8305"/>
<dbReference type="SMR" id="P33308"/>
<dbReference type="BioGRID" id="35835">
    <property type="interactions" value="577"/>
</dbReference>
<dbReference type="ComplexPortal" id="CPX-3226">
    <property type="entry name" value="Core mediator complex"/>
</dbReference>
<dbReference type="DIP" id="DIP-1276N"/>
<dbReference type="FunCoup" id="P33308">
    <property type="interactions" value="167"/>
</dbReference>
<dbReference type="IntAct" id="P33308">
    <property type="interactions" value="33"/>
</dbReference>
<dbReference type="MINT" id="P33308"/>
<dbReference type="STRING" id="4932.YNR010W"/>
<dbReference type="iPTMnet" id="P33308"/>
<dbReference type="PaxDb" id="4932-YNR010W"/>
<dbReference type="PeptideAtlas" id="P33308"/>
<dbReference type="EnsemblFungi" id="YNR010W_mRNA">
    <property type="protein sequence ID" value="YNR010W"/>
    <property type="gene ID" value="YNR010W"/>
</dbReference>
<dbReference type="GeneID" id="855744"/>
<dbReference type="KEGG" id="sce:YNR010W"/>
<dbReference type="AGR" id="SGD:S000005293"/>
<dbReference type="SGD" id="S000005293">
    <property type="gene designation" value="CSE2"/>
</dbReference>
<dbReference type="VEuPathDB" id="FungiDB:YNR010W"/>
<dbReference type="eggNOG" id="ENOG502S8AG">
    <property type="taxonomic scope" value="Eukaryota"/>
</dbReference>
<dbReference type="HOGENOM" id="CLU_143643_0_0_1"/>
<dbReference type="InParanoid" id="P33308"/>
<dbReference type="OMA" id="PHIFYAL"/>
<dbReference type="OrthoDB" id="4069563at2759"/>
<dbReference type="BioCyc" id="YEAST:G3O-33327-MONOMER"/>
<dbReference type="BioGRID-ORCS" id="855744">
    <property type="hits" value="3 hits in 10 CRISPR screens"/>
</dbReference>
<dbReference type="PRO" id="PR:P33308"/>
<dbReference type="Proteomes" id="UP000002311">
    <property type="component" value="Chromosome XIV"/>
</dbReference>
<dbReference type="RNAct" id="P33308">
    <property type="molecule type" value="protein"/>
</dbReference>
<dbReference type="GO" id="GO:0070847">
    <property type="term" value="C:core mediator complex"/>
    <property type="evidence" value="ECO:0000314"/>
    <property type="project" value="SGD"/>
</dbReference>
<dbReference type="GO" id="GO:0005829">
    <property type="term" value="C:cytosol"/>
    <property type="evidence" value="ECO:0000314"/>
    <property type="project" value="SGD"/>
</dbReference>
<dbReference type="GO" id="GO:0016592">
    <property type="term" value="C:mediator complex"/>
    <property type="evidence" value="ECO:0007669"/>
    <property type="project" value="InterPro"/>
</dbReference>
<dbReference type="GO" id="GO:0005634">
    <property type="term" value="C:nucleus"/>
    <property type="evidence" value="ECO:0000314"/>
    <property type="project" value="SGD"/>
</dbReference>
<dbReference type="GO" id="GO:0005198">
    <property type="term" value="F:structural molecule activity"/>
    <property type="evidence" value="ECO:0000315"/>
    <property type="project" value="SGD"/>
</dbReference>
<dbReference type="GO" id="GO:0003713">
    <property type="term" value="F:transcription coactivator activity"/>
    <property type="evidence" value="ECO:0000314"/>
    <property type="project" value="SGD"/>
</dbReference>
<dbReference type="GO" id="GO:0000122">
    <property type="term" value="P:negative regulation of transcription by RNA polymerase II"/>
    <property type="evidence" value="ECO:0000315"/>
    <property type="project" value="SGD"/>
</dbReference>
<dbReference type="GO" id="GO:0045944">
    <property type="term" value="P:positive regulation of transcription by RNA polymerase II"/>
    <property type="evidence" value="ECO:0000315"/>
    <property type="project" value="SGD"/>
</dbReference>
<dbReference type="GO" id="GO:0032968">
    <property type="term" value="P:positive regulation of transcription elongation by RNA polymerase II"/>
    <property type="evidence" value="ECO:0000314"/>
    <property type="project" value="ComplexPortal"/>
</dbReference>
<dbReference type="GO" id="GO:0060261">
    <property type="term" value="P:positive regulation of transcription initiation by RNA polymerase II"/>
    <property type="evidence" value="ECO:0000314"/>
    <property type="project" value="ComplexPortal"/>
</dbReference>
<dbReference type="GO" id="GO:0051123">
    <property type="term" value="P:RNA polymerase II preinitiation complex assembly"/>
    <property type="evidence" value="ECO:0000314"/>
    <property type="project" value="ComplexPortal"/>
</dbReference>
<dbReference type="CDD" id="cd21431">
    <property type="entry name" value="Med9-C"/>
    <property type="match status" value="1"/>
</dbReference>
<dbReference type="InterPro" id="IPR011425">
    <property type="entry name" value="Med9"/>
</dbReference>
<dbReference type="Pfam" id="PF07544">
    <property type="entry name" value="Med9"/>
    <property type="match status" value="1"/>
</dbReference>